<organism>
    <name type="scientific">Shewanella frigidimarina (strain NCIMB 400)</name>
    <dbReference type="NCBI Taxonomy" id="318167"/>
    <lineage>
        <taxon>Bacteria</taxon>
        <taxon>Pseudomonadati</taxon>
        <taxon>Pseudomonadota</taxon>
        <taxon>Gammaproteobacteria</taxon>
        <taxon>Alteromonadales</taxon>
        <taxon>Shewanellaceae</taxon>
        <taxon>Shewanella</taxon>
    </lineage>
</organism>
<reference key="1">
    <citation type="submission" date="2006-08" db="EMBL/GenBank/DDBJ databases">
        <title>Complete sequence of Shewanella frigidimarina NCIMB 400.</title>
        <authorList>
            <consortium name="US DOE Joint Genome Institute"/>
            <person name="Copeland A."/>
            <person name="Lucas S."/>
            <person name="Lapidus A."/>
            <person name="Barry K."/>
            <person name="Detter J.C."/>
            <person name="Glavina del Rio T."/>
            <person name="Hammon N."/>
            <person name="Israni S."/>
            <person name="Dalin E."/>
            <person name="Tice H."/>
            <person name="Pitluck S."/>
            <person name="Fredrickson J.K."/>
            <person name="Kolker E."/>
            <person name="McCuel L.A."/>
            <person name="DiChristina T."/>
            <person name="Nealson K.H."/>
            <person name="Newman D."/>
            <person name="Tiedje J.M."/>
            <person name="Zhou J."/>
            <person name="Romine M.F."/>
            <person name="Culley D.E."/>
            <person name="Serres M."/>
            <person name="Chertkov O."/>
            <person name="Brettin T."/>
            <person name="Bruce D."/>
            <person name="Han C."/>
            <person name="Tapia R."/>
            <person name="Gilna P."/>
            <person name="Schmutz J."/>
            <person name="Larimer F."/>
            <person name="Land M."/>
            <person name="Hauser L."/>
            <person name="Kyrpides N."/>
            <person name="Mikhailova N."/>
            <person name="Richardson P."/>
        </authorList>
    </citation>
    <scope>NUCLEOTIDE SEQUENCE [LARGE SCALE GENOMIC DNA]</scope>
    <source>
        <strain>NCIMB 400</strain>
    </source>
</reference>
<dbReference type="EC" id="2.2.1.9" evidence="1"/>
<dbReference type="EMBL" id="CP000447">
    <property type="protein sequence ID" value="ABI70145.1"/>
    <property type="molecule type" value="Genomic_DNA"/>
</dbReference>
<dbReference type="RefSeq" id="WP_011635772.1">
    <property type="nucleotide sequence ID" value="NC_008345.1"/>
</dbReference>
<dbReference type="SMR" id="Q089C0"/>
<dbReference type="STRING" id="318167.Sfri_0282"/>
<dbReference type="KEGG" id="sfr:Sfri_0282"/>
<dbReference type="eggNOG" id="COG1165">
    <property type="taxonomic scope" value="Bacteria"/>
</dbReference>
<dbReference type="HOGENOM" id="CLU_006051_3_0_6"/>
<dbReference type="OrthoDB" id="9791859at2"/>
<dbReference type="UniPathway" id="UPA00079"/>
<dbReference type="UniPathway" id="UPA01057">
    <property type="reaction ID" value="UER00164"/>
</dbReference>
<dbReference type="Proteomes" id="UP000000684">
    <property type="component" value="Chromosome"/>
</dbReference>
<dbReference type="GO" id="GO:0070204">
    <property type="term" value="F:2-succinyl-5-enolpyruvyl-6-hydroxy-3-cyclohexene-1-carboxylic-acid synthase activity"/>
    <property type="evidence" value="ECO:0007669"/>
    <property type="project" value="UniProtKB-UniRule"/>
</dbReference>
<dbReference type="GO" id="GO:0000287">
    <property type="term" value="F:magnesium ion binding"/>
    <property type="evidence" value="ECO:0007669"/>
    <property type="project" value="UniProtKB-UniRule"/>
</dbReference>
<dbReference type="GO" id="GO:0030145">
    <property type="term" value="F:manganese ion binding"/>
    <property type="evidence" value="ECO:0007669"/>
    <property type="project" value="UniProtKB-UniRule"/>
</dbReference>
<dbReference type="GO" id="GO:0030976">
    <property type="term" value="F:thiamine pyrophosphate binding"/>
    <property type="evidence" value="ECO:0007669"/>
    <property type="project" value="UniProtKB-UniRule"/>
</dbReference>
<dbReference type="GO" id="GO:0009234">
    <property type="term" value="P:menaquinone biosynthetic process"/>
    <property type="evidence" value="ECO:0007669"/>
    <property type="project" value="UniProtKB-UniRule"/>
</dbReference>
<dbReference type="CDD" id="cd07037">
    <property type="entry name" value="TPP_PYR_MenD"/>
    <property type="match status" value="1"/>
</dbReference>
<dbReference type="CDD" id="cd02009">
    <property type="entry name" value="TPP_SHCHC_synthase"/>
    <property type="match status" value="1"/>
</dbReference>
<dbReference type="Gene3D" id="3.40.50.970">
    <property type="match status" value="2"/>
</dbReference>
<dbReference type="Gene3D" id="3.40.50.1220">
    <property type="entry name" value="TPP-binding domain"/>
    <property type="match status" value="1"/>
</dbReference>
<dbReference type="HAMAP" id="MF_01659">
    <property type="entry name" value="MenD"/>
    <property type="match status" value="1"/>
</dbReference>
<dbReference type="InterPro" id="IPR029035">
    <property type="entry name" value="DHS-like_NAD/FAD-binding_dom"/>
</dbReference>
<dbReference type="InterPro" id="IPR004433">
    <property type="entry name" value="MenaQ_synth_MenD"/>
</dbReference>
<dbReference type="InterPro" id="IPR032264">
    <property type="entry name" value="MenD_middle"/>
</dbReference>
<dbReference type="InterPro" id="IPR029061">
    <property type="entry name" value="THDP-binding"/>
</dbReference>
<dbReference type="InterPro" id="IPR012001">
    <property type="entry name" value="Thiamin_PyroP_enz_TPP-bd_dom"/>
</dbReference>
<dbReference type="InterPro" id="IPR011766">
    <property type="entry name" value="TPP_enzyme_TPP-bd"/>
</dbReference>
<dbReference type="NCBIfam" id="TIGR00173">
    <property type="entry name" value="menD"/>
    <property type="match status" value="1"/>
</dbReference>
<dbReference type="PANTHER" id="PTHR42916">
    <property type="entry name" value="2-SUCCINYL-5-ENOLPYRUVYL-6-HYDROXY-3-CYCLOHEXENE-1-CARBOXYLATE SYNTHASE"/>
    <property type="match status" value="1"/>
</dbReference>
<dbReference type="PANTHER" id="PTHR42916:SF1">
    <property type="entry name" value="PROTEIN PHYLLO, CHLOROPLASTIC"/>
    <property type="match status" value="1"/>
</dbReference>
<dbReference type="Pfam" id="PF02775">
    <property type="entry name" value="TPP_enzyme_C"/>
    <property type="match status" value="1"/>
</dbReference>
<dbReference type="Pfam" id="PF16582">
    <property type="entry name" value="TPP_enzyme_M_2"/>
    <property type="match status" value="1"/>
</dbReference>
<dbReference type="Pfam" id="PF02776">
    <property type="entry name" value="TPP_enzyme_N"/>
    <property type="match status" value="1"/>
</dbReference>
<dbReference type="PIRSF" id="PIRSF004983">
    <property type="entry name" value="MenD"/>
    <property type="match status" value="1"/>
</dbReference>
<dbReference type="SUPFAM" id="SSF52467">
    <property type="entry name" value="DHS-like NAD/FAD-binding domain"/>
    <property type="match status" value="1"/>
</dbReference>
<dbReference type="SUPFAM" id="SSF52518">
    <property type="entry name" value="Thiamin diphosphate-binding fold (THDP-binding)"/>
    <property type="match status" value="2"/>
</dbReference>
<feature type="chain" id="PRO_0000341831" description="2-succinyl-5-enolpyruvyl-6-hydroxy-3-cyclohexene-1-carboxylate synthase">
    <location>
        <begin position="1"/>
        <end position="579"/>
    </location>
</feature>
<accession>Q089C0</accession>
<comment type="function">
    <text evidence="1">Catalyzes the thiamine diphosphate-dependent decarboxylation of 2-oxoglutarate and the subsequent addition of the resulting succinic semialdehyde-thiamine pyrophosphate anion to isochorismate to yield 2-succinyl-5-enolpyruvyl-6-hydroxy-3-cyclohexene-1-carboxylate (SEPHCHC).</text>
</comment>
<comment type="catalytic activity">
    <reaction evidence="1">
        <text>isochorismate + 2-oxoglutarate + H(+) = 5-enolpyruvoyl-6-hydroxy-2-succinyl-cyclohex-3-ene-1-carboxylate + CO2</text>
        <dbReference type="Rhea" id="RHEA:25593"/>
        <dbReference type="ChEBI" id="CHEBI:15378"/>
        <dbReference type="ChEBI" id="CHEBI:16526"/>
        <dbReference type="ChEBI" id="CHEBI:16810"/>
        <dbReference type="ChEBI" id="CHEBI:29780"/>
        <dbReference type="ChEBI" id="CHEBI:58818"/>
        <dbReference type="EC" id="2.2.1.9"/>
    </reaction>
</comment>
<comment type="cofactor">
    <cofactor evidence="1">
        <name>Mg(2+)</name>
        <dbReference type="ChEBI" id="CHEBI:18420"/>
    </cofactor>
    <cofactor evidence="1">
        <name>Mn(2+)</name>
        <dbReference type="ChEBI" id="CHEBI:29035"/>
    </cofactor>
</comment>
<comment type="cofactor">
    <cofactor evidence="1">
        <name>thiamine diphosphate</name>
        <dbReference type="ChEBI" id="CHEBI:58937"/>
    </cofactor>
    <text evidence="1">Binds 1 thiamine pyrophosphate per subunit.</text>
</comment>
<comment type="pathway">
    <text evidence="1">Quinol/quinone metabolism; 1,4-dihydroxy-2-naphthoate biosynthesis; 1,4-dihydroxy-2-naphthoate from chorismate: step 2/7.</text>
</comment>
<comment type="pathway">
    <text evidence="1">Quinol/quinone metabolism; menaquinone biosynthesis.</text>
</comment>
<comment type="subunit">
    <text evidence="1">Homodimer.</text>
</comment>
<comment type="similarity">
    <text evidence="1">Belongs to the TPP enzyme family. MenD subfamily.</text>
</comment>
<keyword id="KW-0460">Magnesium</keyword>
<keyword id="KW-0464">Manganese</keyword>
<keyword id="KW-0474">Menaquinone biosynthesis</keyword>
<keyword id="KW-0479">Metal-binding</keyword>
<keyword id="KW-1185">Reference proteome</keyword>
<keyword id="KW-0786">Thiamine pyrophosphate</keyword>
<keyword id="KW-0808">Transferase</keyword>
<name>MEND_SHEFN</name>
<sequence length="579" mass="63746">MQQQTSADMNLLWGQLILEELARLGVKHVCMAPGSRSTPLTLAAASQTQLTRHIHFDERGLGFMALGLAKASNAPVAIITTSGTAVANLYPAIVEAWLTHVPLIILSGDRPPELIDCGANQAIIQPAIFAQYAKQVNLPTPDLGYPANALLSTIDHALANQHQPVHINCMYREPLYPTELVTLAHVKKTASVTTSTYLAPLNQWFENTKPLTRYASLTSAELPTTDTLMRFVHGKGVIVVGTLAPEDNPQQIVALAQKLGWPVLVDAQSQLRQHPGVIGHVDQLLLNPKANKQLEQAERILVFGGRFISKRLLQYIAQQSWHSYWHVVKHGDRLDPTHQSKEFYQASVQAVCQLPWPRSSQANWALQLLPLNESLESLFKQQIDNTTFGEAQVVRAIALAQSDQHILFIGNSLPIRLYDMYAPIATNTPAIYTNRGASGIDGLIATACGVAADKNAPTTLVMGDLSCLHDFNSLALLKQMTQPFVLVIINNDGGNIFNLLPVPNESLRNDFYRLSHGLEFGYGAAMFGLAYRQADDIESFNQAYQEAFEFNCASVIEVNVSPTQASDQITQISQWVKQH</sequence>
<proteinExistence type="inferred from homology"/>
<gene>
    <name evidence="1" type="primary">menD</name>
    <name type="ordered locus">Sfri_0282</name>
</gene>
<evidence type="ECO:0000255" key="1">
    <source>
        <dbReference type="HAMAP-Rule" id="MF_01659"/>
    </source>
</evidence>
<protein>
    <recommendedName>
        <fullName evidence="1">2-succinyl-5-enolpyruvyl-6-hydroxy-3-cyclohexene-1-carboxylate synthase</fullName>
        <shortName evidence="1">SEPHCHC synthase</shortName>
        <ecNumber evidence="1">2.2.1.9</ecNumber>
    </recommendedName>
    <alternativeName>
        <fullName evidence="1">Menaquinone biosynthesis protein MenD</fullName>
    </alternativeName>
</protein>